<dbReference type="EC" id="2.3.1.181" evidence="1"/>
<dbReference type="EMBL" id="AE016822">
    <property type="protein sequence ID" value="AAT88879.1"/>
    <property type="molecule type" value="Genomic_DNA"/>
</dbReference>
<dbReference type="RefSeq" id="WP_011185875.1">
    <property type="nucleotide sequence ID" value="NC_006087.1"/>
</dbReference>
<dbReference type="SMR" id="Q6AFG6"/>
<dbReference type="STRING" id="281090.Lxx10110"/>
<dbReference type="KEGG" id="lxx:Lxx10110"/>
<dbReference type="eggNOG" id="COG0321">
    <property type="taxonomic scope" value="Bacteria"/>
</dbReference>
<dbReference type="HOGENOM" id="CLU_035168_2_1_11"/>
<dbReference type="UniPathway" id="UPA00538">
    <property type="reaction ID" value="UER00592"/>
</dbReference>
<dbReference type="Proteomes" id="UP000001306">
    <property type="component" value="Chromosome"/>
</dbReference>
<dbReference type="GO" id="GO:0005737">
    <property type="term" value="C:cytoplasm"/>
    <property type="evidence" value="ECO:0007669"/>
    <property type="project" value="UniProtKB-SubCell"/>
</dbReference>
<dbReference type="GO" id="GO:0033819">
    <property type="term" value="F:lipoyl(octanoyl) transferase activity"/>
    <property type="evidence" value="ECO:0007669"/>
    <property type="project" value="UniProtKB-EC"/>
</dbReference>
<dbReference type="GO" id="GO:0036211">
    <property type="term" value="P:protein modification process"/>
    <property type="evidence" value="ECO:0007669"/>
    <property type="project" value="InterPro"/>
</dbReference>
<dbReference type="CDD" id="cd16444">
    <property type="entry name" value="LipB"/>
    <property type="match status" value="1"/>
</dbReference>
<dbReference type="Gene3D" id="3.30.930.10">
    <property type="entry name" value="Bira Bifunctional Protein, Domain 2"/>
    <property type="match status" value="1"/>
</dbReference>
<dbReference type="HAMAP" id="MF_00013">
    <property type="entry name" value="LipB"/>
    <property type="match status" value="1"/>
</dbReference>
<dbReference type="InterPro" id="IPR045864">
    <property type="entry name" value="aa-tRNA-synth_II/BPL/LPL"/>
</dbReference>
<dbReference type="InterPro" id="IPR004143">
    <property type="entry name" value="BPL_LPL_catalytic"/>
</dbReference>
<dbReference type="InterPro" id="IPR000544">
    <property type="entry name" value="Octanoyltransferase"/>
</dbReference>
<dbReference type="InterPro" id="IPR020605">
    <property type="entry name" value="Octanoyltransferase_CS"/>
</dbReference>
<dbReference type="NCBIfam" id="TIGR00214">
    <property type="entry name" value="lipB"/>
    <property type="match status" value="1"/>
</dbReference>
<dbReference type="NCBIfam" id="NF010925">
    <property type="entry name" value="PRK14345.1"/>
    <property type="match status" value="1"/>
</dbReference>
<dbReference type="PANTHER" id="PTHR10993:SF7">
    <property type="entry name" value="LIPOYLTRANSFERASE 2, MITOCHONDRIAL-RELATED"/>
    <property type="match status" value="1"/>
</dbReference>
<dbReference type="PANTHER" id="PTHR10993">
    <property type="entry name" value="OCTANOYLTRANSFERASE"/>
    <property type="match status" value="1"/>
</dbReference>
<dbReference type="Pfam" id="PF21948">
    <property type="entry name" value="LplA-B_cat"/>
    <property type="match status" value="1"/>
</dbReference>
<dbReference type="PIRSF" id="PIRSF016262">
    <property type="entry name" value="LPLase"/>
    <property type="match status" value="1"/>
</dbReference>
<dbReference type="SUPFAM" id="SSF55681">
    <property type="entry name" value="Class II aaRS and biotin synthetases"/>
    <property type="match status" value="1"/>
</dbReference>
<dbReference type="PROSITE" id="PS51733">
    <property type="entry name" value="BPL_LPL_CATALYTIC"/>
    <property type="match status" value="1"/>
</dbReference>
<dbReference type="PROSITE" id="PS01313">
    <property type="entry name" value="LIPB"/>
    <property type="match status" value="1"/>
</dbReference>
<protein>
    <recommendedName>
        <fullName evidence="1">Octanoyltransferase</fullName>
        <ecNumber evidence="1">2.3.1.181</ecNumber>
    </recommendedName>
    <alternativeName>
        <fullName evidence="1">Lipoate-protein ligase B</fullName>
    </alternativeName>
    <alternativeName>
        <fullName evidence="1">Lipoyl/octanoyl transferase</fullName>
    </alternativeName>
    <alternativeName>
        <fullName evidence="1">Octanoyl-[acyl-carrier-protein]-protein N-octanoyltransferase</fullName>
    </alternativeName>
</protein>
<reference key="1">
    <citation type="journal article" date="2004" name="Mol. Plant Microbe Interact.">
        <title>The genome sequence of the Gram-positive sugarcane pathogen Leifsonia xyli subsp. xyli.</title>
        <authorList>
            <person name="Monteiro-Vitorello C.B."/>
            <person name="Camargo L.E.A."/>
            <person name="Van Sluys M.A."/>
            <person name="Kitajima J.P."/>
            <person name="Truffi D."/>
            <person name="do Amaral A.M."/>
            <person name="Harakava R."/>
            <person name="de Oliveira J.C.F."/>
            <person name="Wood D."/>
            <person name="de Oliveira M.C."/>
            <person name="Miyaki C.Y."/>
            <person name="Takita M.A."/>
            <person name="da Silva A.C.R."/>
            <person name="Furlan L.R."/>
            <person name="Carraro D.M."/>
            <person name="Camarotte G."/>
            <person name="Almeida N.F. Jr."/>
            <person name="Carrer H."/>
            <person name="Coutinho L.L."/>
            <person name="El-Dorry H.A."/>
            <person name="Ferro M.I.T."/>
            <person name="Gagliardi P.R."/>
            <person name="Giglioti E."/>
            <person name="Goldman M.H.S."/>
            <person name="Goldman G.H."/>
            <person name="Kimura E.T."/>
            <person name="Ferro E.S."/>
            <person name="Kuramae E.E."/>
            <person name="Lemos E.G.M."/>
            <person name="Lemos M.V.F."/>
            <person name="Mauro S.M.Z."/>
            <person name="Machado M.A."/>
            <person name="Marino C.L."/>
            <person name="Menck C.F."/>
            <person name="Nunes L.R."/>
            <person name="Oliveira R.C."/>
            <person name="Pereira G.G."/>
            <person name="Siqueira W."/>
            <person name="de Souza A.A."/>
            <person name="Tsai S.M."/>
            <person name="Zanca A.S."/>
            <person name="Simpson A.J.G."/>
            <person name="Brumbley S.M."/>
            <person name="Setubal J.C."/>
        </authorList>
    </citation>
    <scope>NUCLEOTIDE SEQUENCE [LARGE SCALE GENOMIC DNA]</scope>
    <source>
        <strain>CTCB07</strain>
    </source>
</reference>
<feature type="chain" id="PRO_0000062843" description="Octanoyltransferase">
    <location>
        <begin position="1"/>
        <end position="224"/>
    </location>
</feature>
<feature type="domain" description="BPL/LPL catalytic" evidence="2">
    <location>
        <begin position="33"/>
        <end position="213"/>
    </location>
</feature>
<feature type="region of interest" description="Disordered" evidence="3">
    <location>
        <begin position="51"/>
        <end position="71"/>
    </location>
</feature>
<feature type="active site" description="Acyl-thioester intermediate" evidence="1">
    <location>
        <position position="174"/>
    </location>
</feature>
<feature type="binding site" evidence="1">
    <location>
        <begin position="71"/>
        <end position="78"/>
    </location>
    <ligand>
        <name>substrate</name>
    </ligand>
</feature>
<feature type="binding site" evidence="1">
    <location>
        <begin position="143"/>
        <end position="145"/>
    </location>
    <ligand>
        <name>substrate</name>
    </ligand>
</feature>
<feature type="binding site" evidence="1">
    <location>
        <begin position="156"/>
        <end position="158"/>
    </location>
    <ligand>
        <name>substrate</name>
    </ligand>
</feature>
<feature type="site" description="Lowers pKa of active site Cys" evidence="1">
    <location>
        <position position="140"/>
    </location>
</feature>
<name>LIPB_LEIXX</name>
<comment type="function">
    <text evidence="1">Catalyzes the transfer of endogenously produced octanoic acid from octanoyl-acyl-carrier-protein onto the lipoyl domains of lipoate-dependent enzymes. Lipoyl-ACP can also act as a substrate although octanoyl-ACP is likely to be the physiological substrate.</text>
</comment>
<comment type="catalytic activity">
    <reaction evidence="1">
        <text>octanoyl-[ACP] + L-lysyl-[protein] = N(6)-octanoyl-L-lysyl-[protein] + holo-[ACP] + H(+)</text>
        <dbReference type="Rhea" id="RHEA:17665"/>
        <dbReference type="Rhea" id="RHEA-COMP:9636"/>
        <dbReference type="Rhea" id="RHEA-COMP:9685"/>
        <dbReference type="Rhea" id="RHEA-COMP:9752"/>
        <dbReference type="Rhea" id="RHEA-COMP:9928"/>
        <dbReference type="ChEBI" id="CHEBI:15378"/>
        <dbReference type="ChEBI" id="CHEBI:29969"/>
        <dbReference type="ChEBI" id="CHEBI:64479"/>
        <dbReference type="ChEBI" id="CHEBI:78463"/>
        <dbReference type="ChEBI" id="CHEBI:78809"/>
        <dbReference type="EC" id="2.3.1.181"/>
    </reaction>
</comment>
<comment type="pathway">
    <text evidence="1">Protein modification; protein lipoylation via endogenous pathway; protein N(6)-(lipoyl)lysine from octanoyl-[acyl-carrier-protein]: step 1/2.</text>
</comment>
<comment type="subcellular location">
    <subcellularLocation>
        <location evidence="1">Cytoplasm</location>
    </subcellularLocation>
</comment>
<comment type="miscellaneous">
    <text evidence="1">In the reaction, the free carboxyl group of octanoic acid is attached via an amide linkage to the epsilon-amino group of a specific lysine residue of lipoyl domains of lipoate-dependent enzymes.</text>
</comment>
<comment type="similarity">
    <text evidence="1">Belongs to the LipB family.</text>
</comment>
<gene>
    <name evidence="1" type="primary">lipB</name>
    <name type="ordered locus">Lxx10110</name>
</gene>
<sequence>MMQFDRSGLDGSPVDYETALQLQRRLHGEVATGTTAETMLLLEHAPVYTAGKRTTDDERPTDGTPVVDVDRGGKITWHGPGQLVGYPILRLREPVDVVGYVRRLESALIRVLGELGIAGERIEGRSGVWLPGDGTAPDRKLAAIGIRVAEGVTMHGFALNCSNSLEAYDRIVACGIRDAGVSTITEALGRTVTPQDAAPMVVAALQAEFGREAAPRAAQTETAA</sequence>
<proteinExistence type="inferred from homology"/>
<evidence type="ECO:0000255" key="1">
    <source>
        <dbReference type="HAMAP-Rule" id="MF_00013"/>
    </source>
</evidence>
<evidence type="ECO:0000255" key="2">
    <source>
        <dbReference type="PROSITE-ProRule" id="PRU01067"/>
    </source>
</evidence>
<evidence type="ECO:0000256" key="3">
    <source>
        <dbReference type="SAM" id="MobiDB-lite"/>
    </source>
</evidence>
<accession>Q6AFG6</accession>
<keyword id="KW-0012">Acyltransferase</keyword>
<keyword id="KW-0963">Cytoplasm</keyword>
<keyword id="KW-1185">Reference proteome</keyword>
<keyword id="KW-0808">Transferase</keyword>
<organism>
    <name type="scientific">Leifsonia xyli subsp. xyli (strain CTCB07)</name>
    <dbReference type="NCBI Taxonomy" id="281090"/>
    <lineage>
        <taxon>Bacteria</taxon>
        <taxon>Bacillati</taxon>
        <taxon>Actinomycetota</taxon>
        <taxon>Actinomycetes</taxon>
        <taxon>Micrococcales</taxon>
        <taxon>Microbacteriaceae</taxon>
        <taxon>Leifsonia</taxon>
    </lineage>
</organism>